<reference key="1">
    <citation type="journal article" date="1997" name="Nature">
        <title>The nucleotide sequence of Saccharomyces cerevisiae chromosome VII.</title>
        <authorList>
            <person name="Tettelin H."/>
            <person name="Agostoni-Carbone M.L."/>
            <person name="Albermann K."/>
            <person name="Albers M."/>
            <person name="Arroyo J."/>
            <person name="Backes U."/>
            <person name="Barreiros T."/>
            <person name="Bertani I."/>
            <person name="Bjourson A.J."/>
            <person name="Brueckner M."/>
            <person name="Bruschi C.V."/>
            <person name="Carignani G."/>
            <person name="Castagnoli L."/>
            <person name="Cerdan E."/>
            <person name="Clemente M.L."/>
            <person name="Coblenz A."/>
            <person name="Coglievina M."/>
            <person name="Coissac E."/>
            <person name="Defoor E."/>
            <person name="Del Bino S."/>
            <person name="Delius H."/>
            <person name="Delneri D."/>
            <person name="de Wergifosse P."/>
            <person name="Dujon B."/>
            <person name="Durand P."/>
            <person name="Entian K.-D."/>
            <person name="Eraso P."/>
            <person name="Escribano V."/>
            <person name="Fabiani L."/>
            <person name="Fartmann B."/>
            <person name="Feroli F."/>
            <person name="Feuermann M."/>
            <person name="Frontali L."/>
            <person name="Garcia-Gonzalez M."/>
            <person name="Garcia-Saez M.I."/>
            <person name="Goffeau A."/>
            <person name="Guerreiro P."/>
            <person name="Hani J."/>
            <person name="Hansen M."/>
            <person name="Hebling U."/>
            <person name="Hernandez K."/>
            <person name="Heumann K."/>
            <person name="Hilger F."/>
            <person name="Hofmann B."/>
            <person name="Indge K.J."/>
            <person name="James C.M."/>
            <person name="Klima R."/>
            <person name="Koetter P."/>
            <person name="Kramer B."/>
            <person name="Kramer W."/>
            <person name="Lauquin G."/>
            <person name="Leuther H."/>
            <person name="Louis E.J."/>
            <person name="Maillier E."/>
            <person name="Marconi A."/>
            <person name="Martegani E."/>
            <person name="Mazon M.J."/>
            <person name="Mazzoni C."/>
            <person name="McReynolds A.D.K."/>
            <person name="Melchioretto P."/>
            <person name="Mewes H.-W."/>
            <person name="Minenkova O."/>
            <person name="Mueller-Auer S."/>
            <person name="Nawrocki A."/>
            <person name="Netter P."/>
            <person name="Neu R."/>
            <person name="Nombela C."/>
            <person name="Oliver S.G."/>
            <person name="Panzeri L."/>
            <person name="Paoluzi S."/>
            <person name="Plevani P."/>
            <person name="Portetelle D."/>
            <person name="Portillo F."/>
            <person name="Potier S."/>
            <person name="Purnelle B."/>
            <person name="Rieger M."/>
            <person name="Riles L."/>
            <person name="Rinaldi T."/>
            <person name="Robben J."/>
            <person name="Rodrigues-Pousada C."/>
            <person name="Rodriguez-Belmonte E."/>
            <person name="Rodriguez-Torres A.M."/>
            <person name="Rose M."/>
            <person name="Ruzzi M."/>
            <person name="Saliola M."/>
            <person name="Sanchez-Perez M."/>
            <person name="Schaefer B."/>
            <person name="Schaefer M."/>
            <person name="Scharfe M."/>
            <person name="Schmidheini T."/>
            <person name="Schreer A."/>
            <person name="Skala J."/>
            <person name="Souciet J.-L."/>
            <person name="Steensma H.Y."/>
            <person name="Talla E."/>
            <person name="Thierry A."/>
            <person name="Vandenbol M."/>
            <person name="van der Aart Q.J.M."/>
            <person name="Van Dyck L."/>
            <person name="Vanoni M."/>
            <person name="Verhasselt P."/>
            <person name="Voet M."/>
            <person name="Volckaert G."/>
            <person name="Wambutt R."/>
            <person name="Watson M.D."/>
            <person name="Weber N."/>
            <person name="Wedler E."/>
            <person name="Wedler H."/>
            <person name="Wipfli P."/>
            <person name="Wolf K."/>
            <person name="Wright L.F."/>
            <person name="Zaccaria P."/>
            <person name="Zimmermann M."/>
            <person name="Zollner A."/>
            <person name="Kleine K."/>
        </authorList>
    </citation>
    <scope>NUCLEOTIDE SEQUENCE [LARGE SCALE GENOMIC DNA]</scope>
    <source>
        <strain>ATCC 204508 / S288c</strain>
    </source>
</reference>
<reference key="2">
    <citation type="journal article" date="2014" name="G3 (Bethesda)">
        <title>The reference genome sequence of Saccharomyces cerevisiae: Then and now.</title>
        <authorList>
            <person name="Engel S.R."/>
            <person name="Dietrich F.S."/>
            <person name="Fisk D.G."/>
            <person name="Binkley G."/>
            <person name="Balakrishnan R."/>
            <person name="Costanzo M.C."/>
            <person name="Dwight S.S."/>
            <person name="Hitz B.C."/>
            <person name="Karra K."/>
            <person name="Nash R.S."/>
            <person name="Weng S."/>
            <person name="Wong E.D."/>
            <person name="Lloyd P."/>
            <person name="Skrzypek M.S."/>
            <person name="Miyasato S.R."/>
            <person name="Simison M."/>
            <person name="Cherry J.M."/>
        </authorList>
    </citation>
    <scope>GENOME REANNOTATION</scope>
    <source>
        <strain>ATCC 204508 / S288c</strain>
    </source>
</reference>
<reference key="3">
    <citation type="journal article" date="2007" name="Proc. Natl. Acad. Sci. U.S.A.">
        <title>Analysis of phosphorylation sites on proteins from Saccharomyces cerevisiae by electron transfer dissociation (ETD) mass spectrometry.</title>
        <authorList>
            <person name="Chi A."/>
            <person name="Huttenhower C."/>
            <person name="Geer L.Y."/>
            <person name="Coon J.J."/>
            <person name="Syka J.E.P."/>
            <person name="Bai D.L."/>
            <person name="Shabanowitz J."/>
            <person name="Burke D.J."/>
            <person name="Troyanskaya O.G."/>
            <person name="Hunt D.F."/>
        </authorList>
    </citation>
    <scope>IDENTIFICATION BY MASS SPECTROMETRY [LARGE SCALE ANALYSIS]</scope>
</reference>
<reference key="4">
    <citation type="journal article" date="2008" name="Mol. Cell. Proteomics">
        <title>A multidimensional chromatography technology for in-depth phosphoproteome analysis.</title>
        <authorList>
            <person name="Albuquerque C.P."/>
            <person name="Smolka M.B."/>
            <person name="Payne S.H."/>
            <person name="Bafna V."/>
            <person name="Eng J."/>
            <person name="Zhou H."/>
        </authorList>
    </citation>
    <scope>IDENTIFICATION BY MASS SPECTROMETRY [LARGE SCALE ANALYSIS]</scope>
</reference>
<reference key="5">
    <citation type="journal article" date="2012" name="Proc. Natl. Acad. Sci. U.S.A.">
        <title>N-terminal acetylome analyses and functional insights of the N-terminal acetyltransferase NatB.</title>
        <authorList>
            <person name="Van Damme P."/>
            <person name="Lasa M."/>
            <person name="Polevoda B."/>
            <person name="Gazquez C."/>
            <person name="Elosegui-Artola A."/>
            <person name="Kim D.S."/>
            <person name="De Juan-Pardo E."/>
            <person name="Demeyer K."/>
            <person name="Hole K."/>
            <person name="Larrea E."/>
            <person name="Timmerman E."/>
            <person name="Prieto J."/>
            <person name="Arnesen T."/>
            <person name="Sherman F."/>
            <person name="Gevaert K."/>
            <person name="Aldabe R."/>
        </authorList>
    </citation>
    <scope>IDENTIFICATION BY MASS SPECTROMETRY [LARGE SCALE ANALYSIS]</scope>
</reference>
<accession>P53275</accession>
<accession>D6VUQ9</accession>
<feature type="chain" id="PRO_0000202821" description="Uncharacterized protein YGR127W">
    <location>
        <begin position="1"/>
        <end position="312"/>
    </location>
</feature>
<name>YG37_YEAST</name>
<proteinExistence type="evidence at protein level"/>
<keyword id="KW-1185">Reference proteome</keyword>
<gene>
    <name type="ordered locus">YGR127W</name>
</gene>
<sequence>MCILMATRAHPDYELILISNRDEFLARKTHATCWHNNDFILSPYDLAKTSAEKQIFGTWSGINKEGKLATILNLKLDNEQNNTKSRSRGLLPFIFLSIHKADFEDWDNYKKFEGHYDGLKSTGDFNFFYGDVIKKQYKVIDSLGRTFDVLSSTCRKDLDSYMVVSNGKFYDSSSIPGQAWEKVKVARDSLENLVLENIESDEEKIISSCFQLASKSSLPSTISNPDVLQMVDPNVTMNTIYVPPLRRPPRDDLGASIPDGDYYGTRSQIVLLVSKDSTRVTFIERVLYSSDEDVRKYSVTSPKEEKRFKFKL</sequence>
<dbReference type="EMBL" id="Z72912">
    <property type="protein sequence ID" value="CAA97138.1"/>
    <property type="molecule type" value="Genomic_DNA"/>
</dbReference>
<dbReference type="EMBL" id="Z72913">
    <property type="protein sequence ID" value="CAA97141.1"/>
    <property type="molecule type" value="Genomic_DNA"/>
</dbReference>
<dbReference type="EMBL" id="BK006941">
    <property type="protein sequence ID" value="DAA08220.1"/>
    <property type="molecule type" value="Genomic_DNA"/>
</dbReference>
<dbReference type="PIR" id="S64436">
    <property type="entry name" value="S64436"/>
</dbReference>
<dbReference type="RefSeq" id="NP_011643.1">
    <property type="nucleotide sequence ID" value="NM_001181256.1"/>
</dbReference>
<dbReference type="SMR" id="P53275"/>
<dbReference type="BioGRID" id="33375">
    <property type="interactions" value="52"/>
</dbReference>
<dbReference type="FunCoup" id="P53275">
    <property type="interactions" value="491"/>
</dbReference>
<dbReference type="IntAct" id="P53275">
    <property type="interactions" value="1"/>
</dbReference>
<dbReference type="STRING" id="4932.YGR127W"/>
<dbReference type="iPTMnet" id="P53275"/>
<dbReference type="PaxDb" id="4932-YGR127W"/>
<dbReference type="PeptideAtlas" id="P53275"/>
<dbReference type="EnsemblFungi" id="YGR127W_mRNA">
    <property type="protein sequence ID" value="YGR127W"/>
    <property type="gene ID" value="YGR127W"/>
</dbReference>
<dbReference type="GeneID" id="853028"/>
<dbReference type="KEGG" id="sce:YGR127W"/>
<dbReference type="AGR" id="SGD:S000003359"/>
<dbReference type="SGD" id="S000003359">
    <property type="gene designation" value="YGR127W"/>
</dbReference>
<dbReference type="VEuPathDB" id="FungiDB:YGR127W"/>
<dbReference type="eggNOG" id="KOG2342">
    <property type="taxonomic scope" value="Eukaryota"/>
</dbReference>
<dbReference type="GeneTree" id="ENSGT00390000012733"/>
<dbReference type="HOGENOM" id="CLU_047037_0_0_1"/>
<dbReference type="InParanoid" id="P53275"/>
<dbReference type="OMA" id="QAGGSWF"/>
<dbReference type="OrthoDB" id="191601at2759"/>
<dbReference type="BioCyc" id="YEAST:G3O-30833-MONOMER"/>
<dbReference type="BioGRID-ORCS" id="853028">
    <property type="hits" value="0 hits in 10 CRISPR screens"/>
</dbReference>
<dbReference type="PRO" id="PR:P53275"/>
<dbReference type="Proteomes" id="UP000002311">
    <property type="component" value="Chromosome VII"/>
</dbReference>
<dbReference type="RNAct" id="P53275">
    <property type="molecule type" value="protein"/>
</dbReference>
<dbReference type="GO" id="GO:0005794">
    <property type="term" value="C:Golgi apparatus"/>
    <property type="evidence" value="ECO:0000318"/>
    <property type="project" value="GO_Central"/>
</dbReference>
<dbReference type="GO" id="GO:0005777">
    <property type="term" value="C:peroxisome"/>
    <property type="evidence" value="ECO:0000314"/>
    <property type="project" value="SGD"/>
</dbReference>
<dbReference type="GO" id="GO:0007030">
    <property type="term" value="P:Golgi organization"/>
    <property type="evidence" value="ECO:0000318"/>
    <property type="project" value="GO_Central"/>
</dbReference>
<dbReference type="GO" id="GO:0009306">
    <property type="term" value="P:protein secretion"/>
    <property type="evidence" value="ECO:0000318"/>
    <property type="project" value="GO_Central"/>
</dbReference>
<dbReference type="InterPro" id="IPR008551">
    <property type="entry name" value="TANGO2"/>
</dbReference>
<dbReference type="PANTHER" id="PTHR17985">
    <property type="entry name" value="SER/THR-RICH PROTEIN T10 IN DGCR REGION"/>
    <property type="match status" value="1"/>
</dbReference>
<dbReference type="PANTHER" id="PTHR17985:SF8">
    <property type="entry name" value="TRANSPORT AND GOLGI ORGANIZATION PROTEIN 2 HOMOLOG"/>
    <property type="match status" value="1"/>
</dbReference>
<dbReference type="Pfam" id="PF05742">
    <property type="entry name" value="TANGO2"/>
    <property type="match status" value="1"/>
</dbReference>
<organism>
    <name type="scientific">Saccharomyces cerevisiae (strain ATCC 204508 / S288c)</name>
    <name type="common">Baker's yeast</name>
    <dbReference type="NCBI Taxonomy" id="559292"/>
    <lineage>
        <taxon>Eukaryota</taxon>
        <taxon>Fungi</taxon>
        <taxon>Dikarya</taxon>
        <taxon>Ascomycota</taxon>
        <taxon>Saccharomycotina</taxon>
        <taxon>Saccharomycetes</taxon>
        <taxon>Saccharomycetales</taxon>
        <taxon>Saccharomycetaceae</taxon>
        <taxon>Saccharomyces</taxon>
    </lineage>
</organism>
<protein>
    <recommendedName>
        <fullName>Uncharacterized protein YGR127W</fullName>
    </recommendedName>
</protein>